<name>LDH_CLOBJ</name>
<gene>
    <name evidence="1" type="primary">ldh</name>
    <name type="ordered locus">CLM_1754</name>
</gene>
<accession>C1FMZ1</accession>
<proteinExistence type="inferred from homology"/>
<sequence length="318" mass="34735">MIKKRNTTKISVIGAGSVGATTAYALMLSGVATEIVLVDVNKSKTEGEAMDLSHGADFVKPVNILSGDYKDTEGSDIVVITAGAAQKVGETRLQLINKNINIFKSIIPEVVKYNKDAILLVVSNPVDVLSYVTYKLSGFPKERVIGSGTVLDTSRLKHEIGKRYKIDPRNVNTYIMGEHGDSEIATWSVTNIQNIKIDEYANKENLEYNDNFRKEVYENVKNAAYEVINRKGATFYAIALAVTRIVKAILGDEKTILPVSTLVENYYGIKDVYLGMPCIVGGSGIEKALSIDLNKTEASKLVKSAETLKNTLNNASCL</sequence>
<comment type="function">
    <text evidence="1">Catalyzes the conversion of lactate to pyruvate.</text>
</comment>
<comment type="catalytic activity">
    <reaction evidence="1">
        <text>(S)-lactate + NAD(+) = pyruvate + NADH + H(+)</text>
        <dbReference type="Rhea" id="RHEA:23444"/>
        <dbReference type="ChEBI" id="CHEBI:15361"/>
        <dbReference type="ChEBI" id="CHEBI:15378"/>
        <dbReference type="ChEBI" id="CHEBI:16651"/>
        <dbReference type="ChEBI" id="CHEBI:57540"/>
        <dbReference type="ChEBI" id="CHEBI:57945"/>
        <dbReference type="EC" id="1.1.1.27"/>
    </reaction>
</comment>
<comment type="pathway">
    <text evidence="1">Fermentation; pyruvate fermentation to lactate; (S)-lactate from pyruvate: step 1/1.</text>
</comment>
<comment type="subunit">
    <text evidence="1">Homotetramer.</text>
</comment>
<comment type="subcellular location">
    <subcellularLocation>
        <location evidence="1">Cytoplasm</location>
    </subcellularLocation>
</comment>
<comment type="similarity">
    <text evidence="1">Belongs to the LDH/MDH superfamily. LDH family.</text>
</comment>
<evidence type="ECO:0000255" key="1">
    <source>
        <dbReference type="HAMAP-Rule" id="MF_00488"/>
    </source>
</evidence>
<dbReference type="EC" id="1.1.1.27" evidence="1"/>
<dbReference type="EMBL" id="CP001581">
    <property type="protein sequence ID" value="ACO85486.1"/>
    <property type="molecule type" value="Genomic_DNA"/>
</dbReference>
<dbReference type="RefSeq" id="WP_003358650.1">
    <property type="nucleotide sequence ID" value="NC_012563.1"/>
</dbReference>
<dbReference type="SMR" id="C1FMZ1"/>
<dbReference type="KEGG" id="cby:CLM_1754"/>
<dbReference type="eggNOG" id="COG0039">
    <property type="taxonomic scope" value="Bacteria"/>
</dbReference>
<dbReference type="HOGENOM" id="CLU_045401_1_1_9"/>
<dbReference type="UniPathway" id="UPA00554">
    <property type="reaction ID" value="UER00611"/>
</dbReference>
<dbReference type="Proteomes" id="UP000001374">
    <property type="component" value="Chromosome"/>
</dbReference>
<dbReference type="GO" id="GO:0005737">
    <property type="term" value="C:cytoplasm"/>
    <property type="evidence" value="ECO:0007669"/>
    <property type="project" value="UniProtKB-SubCell"/>
</dbReference>
<dbReference type="GO" id="GO:0004459">
    <property type="term" value="F:L-lactate dehydrogenase activity"/>
    <property type="evidence" value="ECO:0007669"/>
    <property type="project" value="UniProtKB-UniRule"/>
</dbReference>
<dbReference type="GO" id="GO:0006096">
    <property type="term" value="P:glycolytic process"/>
    <property type="evidence" value="ECO:0007669"/>
    <property type="project" value="UniProtKB-UniRule"/>
</dbReference>
<dbReference type="GO" id="GO:0006089">
    <property type="term" value="P:lactate metabolic process"/>
    <property type="evidence" value="ECO:0007669"/>
    <property type="project" value="TreeGrafter"/>
</dbReference>
<dbReference type="CDD" id="cd05292">
    <property type="entry name" value="LDH_2"/>
    <property type="match status" value="1"/>
</dbReference>
<dbReference type="FunFam" id="3.40.50.720:FF:000018">
    <property type="entry name" value="Malate dehydrogenase"/>
    <property type="match status" value="1"/>
</dbReference>
<dbReference type="Gene3D" id="3.90.110.10">
    <property type="entry name" value="Lactate dehydrogenase/glycoside hydrolase, family 4, C-terminal"/>
    <property type="match status" value="1"/>
</dbReference>
<dbReference type="Gene3D" id="3.40.50.720">
    <property type="entry name" value="NAD(P)-binding Rossmann-like Domain"/>
    <property type="match status" value="1"/>
</dbReference>
<dbReference type="HAMAP" id="MF_00488">
    <property type="entry name" value="Lactate_dehydrog"/>
    <property type="match status" value="1"/>
</dbReference>
<dbReference type="InterPro" id="IPR001557">
    <property type="entry name" value="L-lactate/malate_DH"/>
</dbReference>
<dbReference type="InterPro" id="IPR011304">
    <property type="entry name" value="L-lactate_DH"/>
</dbReference>
<dbReference type="InterPro" id="IPR018177">
    <property type="entry name" value="L-lactate_DH_AS"/>
</dbReference>
<dbReference type="InterPro" id="IPR022383">
    <property type="entry name" value="Lactate/malate_DH_C"/>
</dbReference>
<dbReference type="InterPro" id="IPR001236">
    <property type="entry name" value="Lactate/malate_DH_N"/>
</dbReference>
<dbReference type="InterPro" id="IPR015955">
    <property type="entry name" value="Lactate_DH/Glyco_Ohase_4_C"/>
</dbReference>
<dbReference type="InterPro" id="IPR036291">
    <property type="entry name" value="NAD(P)-bd_dom_sf"/>
</dbReference>
<dbReference type="NCBIfam" id="TIGR01771">
    <property type="entry name" value="L-LDH-NAD"/>
    <property type="match status" value="1"/>
</dbReference>
<dbReference type="NCBIfam" id="NF000824">
    <property type="entry name" value="PRK00066.1"/>
    <property type="match status" value="1"/>
</dbReference>
<dbReference type="NCBIfam" id="NF004863">
    <property type="entry name" value="PRK06223.1"/>
    <property type="match status" value="1"/>
</dbReference>
<dbReference type="PANTHER" id="PTHR43128">
    <property type="entry name" value="L-2-HYDROXYCARBOXYLATE DEHYDROGENASE (NAD(P)(+))"/>
    <property type="match status" value="1"/>
</dbReference>
<dbReference type="PANTHER" id="PTHR43128:SF16">
    <property type="entry name" value="L-LACTATE DEHYDROGENASE"/>
    <property type="match status" value="1"/>
</dbReference>
<dbReference type="Pfam" id="PF02866">
    <property type="entry name" value="Ldh_1_C"/>
    <property type="match status" value="1"/>
</dbReference>
<dbReference type="Pfam" id="PF00056">
    <property type="entry name" value="Ldh_1_N"/>
    <property type="match status" value="1"/>
</dbReference>
<dbReference type="PIRSF" id="PIRSF000102">
    <property type="entry name" value="Lac_mal_DH"/>
    <property type="match status" value="1"/>
</dbReference>
<dbReference type="PRINTS" id="PR00086">
    <property type="entry name" value="LLDHDRGNASE"/>
</dbReference>
<dbReference type="SUPFAM" id="SSF56327">
    <property type="entry name" value="LDH C-terminal domain-like"/>
    <property type="match status" value="1"/>
</dbReference>
<dbReference type="SUPFAM" id="SSF51735">
    <property type="entry name" value="NAD(P)-binding Rossmann-fold domains"/>
    <property type="match status" value="1"/>
</dbReference>
<dbReference type="PROSITE" id="PS00064">
    <property type="entry name" value="L_LDH"/>
    <property type="match status" value="1"/>
</dbReference>
<organism>
    <name type="scientific">Clostridium botulinum (strain Kyoto / Type A2)</name>
    <dbReference type="NCBI Taxonomy" id="536232"/>
    <lineage>
        <taxon>Bacteria</taxon>
        <taxon>Bacillati</taxon>
        <taxon>Bacillota</taxon>
        <taxon>Clostridia</taxon>
        <taxon>Eubacteriales</taxon>
        <taxon>Clostridiaceae</taxon>
        <taxon>Clostridium</taxon>
    </lineage>
</organism>
<protein>
    <recommendedName>
        <fullName evidence="1">L-lactate dehydrogenase</fullName>
        <shortName evidence="1">L-LDH</shortName>
        <ecNumber evidence="1">1.1.1.27</ecNumber>
    </recommendedName>
</protein>
<keyword id="KW-0963">Cytoplasm</keyword>
<keyword id="KW-0520">NAD</keyword>
<keyword id="KW-0560">Oxidoreductase</keyword>
<keyword id="KW-0597">Phosphoprotein</keyword>
<feature type="chain" id="PRO_1000190774" description="L-lactate dehydrogenase">
    <location>
        <begin position="1"/>
        <end position="318"/>
    </location>
</feature>
<feature type="active site" description="Proton acceptor" evidence="1">
    <location>
        <position position="179"/>
    </location>
</feature>
<feature type="binding site" evidence="1">
    <location>
        <position position="18"/>
    </location>
    <ligand>
        <name>NAD(+)</name>
        <dbReference type="ChEBI" id="CHEBI:57540"/>
    </ligand>
</feature>
<feature type="binding site" evidence="1">
    <location>
        <position position="39"/>
    </location>
    <ligand>
        <name>NAD(+)</name>
        <dbReference type="ChEBI" id="CHEBI:57540"/>
    </ligand>
</feature>
<feature type="binding site" evidence="1">
    <location>
        <position position="44"/>
    </location>
    <ligand>
        <name>NAD(+)</name>
        <dbReference type="ChEBI" id="CHEBI:57540"/>
    </ligand>
</feature>
<feature type="binding site" evidence="1">
    <location>
        <position position="69"/>
    </location>
    <ligand>
        <name>NAD(+)</name>
        <dbReference type="ChEBI" id="CHEBI:57540"/>
    </ligand>
</feature>
<feature type="binding site" evidence="1">
    <location>
        <begin position="83"/>
        <end position="84"/>
    </location>
    <ligand>
        <name>NAD(+)</name>
        <dbReference type="ChEBI" id="CHEBI:57540"/>
    </ligand>
</feature>
<feature type="binding site" evidence="1">
    <location>
        <position position="86"/>
    </location>
    <ligand>
        <name>substrate</name>
    </ligand>
</feature>
<feature type="binding site" evidence="1">
    <location>
        <position position="92"/>
    </location>
    <ligand>
        <name>substrate</name>
    </ligand>
</feature>
<feature type="binding site" evidence="1">
    <location>
        <position position="105"/>
    </location>
    <ligand>
        <name>NAD(+)</name>
        <dbReference type="ChEBI" id="CHEBI:57540"/>
    </ligand>
</feature>
<feature type="binding site" evidence="1">
    <location>
        <begin position="122"/>
        <end position="124"/>
    </location>
    <ligand>
        <name>NAD(+)</name>
        <dbReference type="ChEBI" id="CHEBI:57540"/>
    </ligand>
</feature>
<feature type="binding site" evidence="1">
    <location>
        <begin position="124"/>
        <end position="127"/>
    </location>
    <ligand>
        <name>substrate</name>
    </ligand>
</feature>
<feature type="binding site" evidence="1">
    <location>
        <position position="147"/>
    </location>
    <ligand>
        <name>NAD(+)</name>
        <dbReference type="ChEBI" id="CHEBI:57540"/>
    </ligand>
</feature>
<feature type="binding site" evidence="1">
    <location>
        <begin position="152"/>
        <end position="155"/>
    </location>
    <ligand>
        <name>substrate</name>
    </ligand>
</feature>
<feature type="binding site" evidence="1">
    <location>
        <position position="234"/>
    </location>
    <ligand>
        <name>substrate</name>
    </ligand>
</feature>
<feature type="modified residue" description="Phosphotyrosine" evidence="1">
    <location>
        <position position="225"/>
    </location>
</feature>
<reference key="1">
    <citation type="submission" date="2008-10" db="EMBL/GenBank/DDBJ databases">
        <title>Genome sequence of Clostridium botulinum A2 Kyoto.</title>
        <authorList>
            <person name="Shrivastava S."/>
            <person name="Brinkac L.M."/>
            <person name="Brown J.L."/>
            <person name="Bruce D."/>
            <person name="Detter C.C."/>
            <person name="Johnson E.A."/>
            <person name="Munk C.A."/>
            <person name="Smith L.A."/>
            <person name="Smith T.J."/>
            <person name="Sutton G."/>
            <person name="Brettin T.S."/>
        </authorList>
    </citation>
    <scope>NUCLEOTIDE SEQUENCE [LARGE SCALE GENOMIC DNA]</scope>
    <source>
        <strain>Kyoto / Type A2</strain>
    </source>
</reference>